<feature type="chain" id="PRO_1000188196" description="RNA polymerase-associated protein RapA">
    <location>
        <begin position="1"/>
        <end position="969"/>
    </location>
</feature>
<feature type="domain" description="Helicase ATP-binding" evidence="1">
    <location>
        <begin position="164"/>
        <end position="334"/>
    </location>
</feature>
<feature type="domain" description="Helicase C-terminal" evidence="1">
    <location>
        <begin position="492"/>
        <end position="668"/>
    </location>
</feature>
<feature type="short sequence motif" description="DEAH box">
    <location>
        <begin position="280"/>
        <end position="283"/>
    </location>
</feature>
<feature type="binding site" evidence="1">
    <location>
        <begin position="177"/>
        <end position="184"/>
    </location>
    <ligand>
        <name>ATP</name>
        <dbReference type="ChEBI" id="CHEBI:30616"/>
    </ligand>
</feature>
<reference key="1">
    <citation type="submission" date="2008-08" db="EMBL/GenBank/DDBJ databases">
        <title>Complete sequence of Vibrio fischeri strain MJ11.</title>
        <authorList>
            <person name="Mandel M.J."/>
            <person name="Stabb E.V."/>
            <person name="Ruby E.G."/>
            <person name="Ferriera S."/>
            <person name="Johnson J."/>
            <person name="Kravitz S."/>
            <person name="Beeson K."/>
            <person name="Sutton G."/>
            <person name="Rogers Y.-H."/>
            <person name="Friedman R."/>
            <person name="Frazier M."/>
            <person name="Venter J.C."/>
        </authorList>
    </citation>
    <scope>NUCLEOTIDE SEQUENCE [LARGE SCALE GENOMIC DNA]</scope>
    <source>
        <strain>MJ11</strain>
    </source>
</reference>
<dbReference type="EC" id="3.6.4.-" evidence="1"/>
<dbReference type="EMBL" id="CP001139">
    <property type="protein sequence ID" value="ACH64887.1"/>
    <property type="molecule type" value="Genomic_DNA"/>
</dbReference>
<dbReference type="RefSeq" id="WP_005417288.1">
    <property type="nucleotide sequence ID" value="NC_011184.1"/>
</dbReference>
<dbReference type="SMR" id="B5FGE9"/>
<dbReference type="KEGG" id="vfm:VFMJ11_0258"/>
<dbReference type="HOGENOM" id="CLU_011520_0_0_6"/>
<dbReference type="Proteomes" id="UP000001857">
    <property type="component" value="Chromosome I"/>
</dbReference>
<dbReference type="GO" id="GO:0005524">
    <property type="term" value="F:ATP binding"/>
    <property type="evidence" value="ECO:0007669"/>
    <property type="project" value="UniProtKB-UniRule"/>
</dbReference>
<dbReference type="GO" id="GO:0003677">
    <property type="term" value="F:DNA binding"/>
    <property type="evidence" value="ECO:0007669"/>
    <property type="project" value="UniProtKB-KW"/>
</dbReference>
<dbReference type="GO" id="GO:0004386">
    <property type="term" value="F:helicase activity"/>
    <property type="evidence" value="ECO:0007669"/>
    <property type="project" value="UniProtKB-UniRule"/>
</dbReference>
<dbReference type="GO" id="GO:0016817">
    <property type="term" value="F:hydrolase activity, acting on acid anhydrides"/>
    <property type="evidence" value="ECO:0007669"/>
    <property type="project" value="InterPro"/>
</dbReference>
<dbReference type="GO" id="GO:0006355">
    <property type="term" value="P:regulation of DNA-templated transcription"/>
    <property type="evidence" value="ECO:0007669"/>
    <property type="project" value="UniProtKB-UniRule"/>
</dbReference>
<dbReference type="CDD" id="cd18011">
    <property type="entry name" value="DEXDc_RapA"/>
    <property type="match status" value="1"/>
</dbReference>
<dbReference type="CDD" id="cd18793">
    <property type="entry name" value="SF2_C_SNF"/>
    <property type="match status" value="1"/>
</dbReference>
<dbReference type="FunFam" id="3.40.50.10810:FF:000012">
    <property type="entry name" value="RNA polymerase-associated protein RapA"/>
    <property type="match status" value="1"/>
</dbReference>
<dbReference type="Gene3D" id="2.30.30.140">
    <property type="match status" value="1"/>
</dbReference>
<dbReference type="Gene3D" id="2.30.30.930">
    <property type="match status" value="1"/>
</dbReference>
<dbReference type="Gene3D" id="3.30.360.80">
    <property type="match status" value="1"/>
</dbReference>
<dbReference type="Gene3D" id="6.10.140.1500">
    <property type="match status" value="1"/>
</dbReference>
<dbReference type="Gene3D" id="6.10.140.2230">
    <property type="match status" value="1"/>
</dbReference>
<dbReference type="Gene3D" id="3.40.50.300">
    <property type="entry name" value="P-loop containing nucleotide triphosphate hydrolases"/>
    <property type="match status" value="1"/>
</dbReference>
<dbReference type="Gene3D" id="3.40.50.10810">
    <property type="entry name" value="Tandem AAA-ATPase domain"/>
    <property type="match status" value="1"/>
</dbReference>
<dbReference type="HAMAP" id="MF_01821">
    <property type="entry name" value="Helicase_RapA"/>
    <property type="match status" value="1"/>
</dbReference>
<dbReference type="InterPro" id="IPR014001">
    <property type="entry name" value="Helicase_ATP-bd"/>
</dbReference>
<dbReference type="InterPro" id="IPR001650">
    <property type="entry name" value="Helicase_C-like"/>
</dbReference>
<dbReference type="InterPro" id="IPR023949">
    <property type="entry name" value="Helicase_RapA"/>
</dbReference>
<dbReference type="InterPro" id="IPR027417">
    <property type="entry name" value="P-loop_NTPase"/>
</dbReference>
<dbReference type="InterPro" id="IPR022737">
    <property type="entry name" value="RapA_C"/>
</dbReference>
<dbReference type="InterPro" id="IPR038718">
    <property type="entry name" value="SNF2-like_sf"/>
</dbReference>
<dbReference type="InterPro" id="IPR049730">
    <property type="entry name" value="SNF2/RAD54-like_C"/>
</dbReference>
<dbReference type="InterPro" id="IPR000330">
    <property type="entry name" value="SNF2_N"/>
</dbReference>
<dbReference type="InterPro" id="IPR040765">
    <property type="entry name" value="Tudor_1_RapA"/>
</dbReference>
<dbReference type="InterPro" id="IPR040766">
    <property type="entry name" value="Tudor_2_RapA"/>
</dbReference>
<dbReference type="NCBIfam" id="NF003426">
    <property type="entry name" value="PRK04914.1"/>
    <property type="match status" value="1"/>
</dbReference>
<dbReference type="PANTHER" id="PTHR45766">
    <property type="entry name" value="DNA ANNEALING HELICASE AND ENDONUCLEASE ZRANB3 FAMILY MEMBER"/>
    <property type="match status" value="1"/>
</dbReference>
<dbReference type="PANTHER" id="PTHR45766:SF6">
    <property type="entry name" value="SWI_SNF-RELATED MATRIX-ASSOCIATED ACTIN-DEPENDENT REGULATOR OF CHROMATIN SUBFAMILY A-LIKE PROTEIN 1"/>
    <property type="match status" value="1"/>
</dbReference>
<dbReference type="Pfam" id="PF00271">
    <property type="entry name" value="Helicase_C"/>
    <property type="match status" value="1"/>
</dbReference>
<dbReference type="Pfam" id="PF12137">
    <property type="entry name" value="RapA_C"/>
    <property type="match status" value="1"/>
</dbReference>
<dbReference type="Pfam" id="PF00176">
    <property type="entry name" value="SNF2-rel_dom"/>
    <property type="match status" value="1"/>
</dbReference>
<dbReference type="Pfam" id="PF18339">
    <property type="entry name" value="Tudor_1_RapA"/>
    <property type="match status" value="1"/>
</dbReference>
<dbReference type="Pfam" id="PF18337">
    <property type="entry name" value="Tudor_RapA"/>
    <property type="match status" value="1"/>
</dbReference>
<dbReference type="SMART" id="SM00487">
    <property type="entry name" value="DEXDc"/>
    <property type="match status" value="1"/>
</dbReference>
<dbReference type="SMART" id="SM00490">
    <property type="entry name" value="HELICc"/>
    <property type="match status" value="1"/>
</dbReference>
<dbReference type="SUPFAM" id="SSF52540">
    <property type="entry name" value="P-loop containing nucleoside triphosphate hydrolases"/>
    <property type="match status" value="2"/>
</dbReference>
<dbReference type="PROSITE" id="PS51192">
    <property type="entry name" value="HELICASE_ATP_BIND_1"/>
    <property type="match status" value="1"/>
</dbReference>
<dbReference type="PROSITE" id="PS51194">
    <property type="entry name" value="HELICASE_CTER"/>
    <property type="match status" value="1"/>
</dbReference>
<organism>
    <name type="scientific">Aliivibrio fischeri (strain MJ11)</name>
    <name type="common">Vibrio fischeri</name>
    <dbReference type="NCBI Taxonomy" id="388396"/>
    <lineage>
        <taxon>Bacteria</taxon>
        <taxon>Pseudomonadati</taxon>
        <taxon>Pseudomonadota</taxon>
        <taxon>Gammaproteobacteria</taxon>
        <taxon>Vibrionales</taxon>
        <taxon>Vibrionaceae</taxon>
        <taxon>Aliivibrio</taxon>
    </lineage>
</organism>
<keyword id="KW-0010">Activator</keyword>
<keyword id="KW-0067">ATP-binding</keyword>
<keyword id="KW-0238">DNA-binding</keyword>
<keyword id="KW-0347">Helicase</keyword>
<keyword id="KW-0378">Hydrolase</keyword>
<keyword id="KW-0547">Nucleotide-binding</keyword>
<keyword id="KW-0804">Transcription</keyword>
<keyword id="KW-0805">Transcription regulation</keyword>
<name>RAPA_ALIFM</name>
<protein>
    <recommendedName>
        <fullName evidence="1">RNA polymerase-associated protein RapA</fullName>
        <ecNumber evidence="1">3.6.4.-</ecNumber>
    </recommendedName>
    <alternativeName>
        <fullName evidence="1">ATP-dependent helicase HepA</fullName>
    </alternativeName>
</protein>
<comment type="function">
    <text evidence="1">Transcription regulator that activates transcription by stimulating RNA polymerase (RNAP) recycling in case of stress conditions such as supercoiled DNA or high salt concentrations. Probably acts by releasing the RNAP, when it is trapped or immobilized on tightly supercoiled DNA. Does not activate transcription on linear DNA. Probably not involved in DNA repair.</text>
</comment>
<comment type="subunit">
    <text evidence="1">Interacts with the RNAP. Has a higher affinity for the core RNAP than for the holoenzyme. Its ATPase activity is stimulated by binding to RNAP.</text>
</comment>
<comment type="similarity">
    <text evidence="1">Belongs to the SNF2/RAD54 helicase family. RapA subfamily.</text>
</comment>
<sequence length="969" mass="109207">MSFALGQRWISDTESDLGLGTVVAVDDRTVSLLFAASEENRLYAKHDAPVTRVMFNKGDTIESHEGWSLDVEDVIEEGGLLTYIGTRVDTDEANVVLRETLLSHQIRFNKPQDKLFAGQIDRMDRFALRFRALQNQYEQHKSPMRGLCGMRAGLIPHQLFIAHEVGRRYAPRVLLADEVGLGKTIEAGMIIHQQVLSGRAERVLIVVPETLQHQWLVEMMRRFNLHFSIFDEERCVEAYADSENPFDTAQFVLCSLDFIRKSKRRFEQVVEADWDLLVVDEAHHLEWNQTKPSREYQVIEAIAEETPGVLLLTATPEQLGHESHFARLRLLDPDRFYDYDAFVEEERQYQPVADAVTALMSGEKLSNDAKNRITELLSEQDVEPLFRIIESSAAEDEQAQARQELVDNLMDRHGTGRVLFRNTRAAIKGFPQRNLNLMPMPLPSQYATSMRVATMMGGRMTDEARAMKMLYPEEIFQEFEGDSATWWQFDPRVNWLLELLKENRNEKVLIIASRASTALQLEQALREREGIRGTVFHEGMSIIERDKAAAYFAQEEGGAQVLICSEIGSEGRNFQFANQLVMFDLPFNPDLLEQRIGRLDRIGQKRDIEIHVPYLQGTSQELLARWFDEGLNAFGETCPTGRAVYDKFADAIIAILATGKSDGLESLIEESAALNKSLKAQLEQGRDRLLEVHSNGGDKAKEIAEQIAATDGDTNLVNFALNLFDTIGLNQDDKGENAIVVTPAENMLVSSYPGLPYEGCTITFDRETALSREDMNLISWEHPMIQGGIDLVLTEGVGATAVSLLKNKALPAGTLLLELVYVVDAQAPKQSGIARFLPKTPIRIMMDGKGNDLSAQVEFESFNRQLSPVNRHMASKLVNSVQKEIHGLIDKAEISMEERLESVRTDAEKEMKAALNSELERLQALKAVNPNIRDEELTQIETQMSELSGYIGKAQVQLDSLRLIVVSHN</sequence>
<proteinExistence type="inferred from homology"/>
<gene>
    <name evidence="1" type="primary">rapA</name>
    <name type="ordered locus">VFMJ11_0258</name>
</gene>
<accession>B5FGE9</accession>
<evidence type="ECO:0000255" key="1">
    <source>
        <dbReference type="HAMAP-Rule" id="MF_01821"/>
    </source>
</evidence>